<accession>A1ANV0</accession>
<protein>
    <recommendedName>
        <fullName evidence="1">Chaperone protein DnaK</fullName>
    </recommendedName>
    <alternativeName>
        <fullName evidence="1">HSP70</fullName>
    </alternativeName>
    <alternativeName>
        <fullName evidence="1">Heat shock 70 kDa protein</fullName>
    </alternativeName>
    <alternativeName>
        <fullName evidence="1">Heat shock protein 70</fullName>
    </alternativeName>
</protein>
<gene>
    <name evidence="1" type="primary">dnaK</name>
    <name type="ordered locus">Ppro_1404</name>
</gene>
<keyword id="KW-0067">ATP-binding</keyword>
<keyword id="KW-0143">Chaperone</keyword>
<keyword id="KW-0547">Nucleotide-binding</keyword>
<keyword id="KW-0597">Phosphoprotein</keyword>
<keyword id="KW-1185">Reference proteome</keyword>
<keyword id="KW-0346">Stress response</keyword>
<evidence type="ECO:0000255" key="1">
    <source>
        <dbReference type="HAMAP-Rule" id="MF_00332"/>
    </source>
</evidence>
<evidence type="ECO:0000256" key="2">
    <source>
        <dbReference type="SAM" id="MobiDB-lite"/>
    </source>
</evidence>
<proteinExistence type="inferred from homology"/>
<organism>
    <name type="scientific">Pelobacter propionicus (strain DSM 2379 / NBRC 103807 / OttBd1)</name>
    <dbReference type="NCBI Taxonomy" id="338966"/>
    <lineage>
        <taxon>Bacteria</taxon>
        <taxon>Pseudomonadati</taxon>
        <taxon>Thermodesulfobacteriota</taxon>
        <taxon>Desulfuromonadia</taxon>
        <taxon>Desulfuromonadales</taxon>
        <taxon>Desulfuromonadaceae</taxon>
        <taxon>Pelobacter</taxon>
    </lineage>
</organism>
<comment type="function">
    <text evidence="1">Acts as a chaperone.</text>
</comment>
<comment type="induction">
    <text evidence="1">By stress conditions e.g. heat shock.</text>
</comment>
<comment type="similarity">
    <text evidence="1">Belongs to the heat shock protein 70 family.</text>
</comment>
<feature type="chain" id="PRO_1000059626" description="Chaperone protein DnaK">
    <location>
        <begin position="1"/>
        <end position="636"/>
    </location>
</feature>
<feature type="region of interest" description="Disordered" evidence="2">
    <location>
        <begin position="598"/>
        <end position="636"/>
    </location>
</feature>
<feature type="compositionally biased region" description="Basic and acidic residues" evidence="2">
    <location>
        <begin position="603"/>
        <end position="625"/>
    </location>
</feature>
<feature type="compositionally biased region" description="Acidic residues" evidence="2">
    <location>
        <begin position="626"/>
        <end position="636"/>
    </location>
</feature>
<feature type="modified residue" description="Phosphothreonine; by autocatalysis" evidence="1">
    <location>
        <position position="198"/>
    </location>
</feature>
<name>DNAK_PELPD</name>
<sequence length="636" mass="68613">MSKVIGIDLGTTNSCVAIMEGGEPIVIANSEGSRTTPSIVAFADNGERLVGQQAKRQAVTNPENTLYAIKRLIGRKFDTEAVKRDIAISPFKIVKADNNDAWVEARGKRYSPPEISAFVLQKMKQTAEDYLGQTVTDAVITVPAYFDDSQRQATKDAGKIAGLNVLRIINEPTAAALAYGLDKKKEEKVAVFDLGGGTFDISILELGDGVFEVKSTNGDTFLGGEDFDQLVIDWIADEFHKDQGINLRGDKMALQRLKEAAEKAKCELSSSMETDINLPFITADASGPKHLTMKLSRAKLETICGELLAKLEGPCRTAMKDAGLSASDIDEVILVGGMTRMPAVQKKVEAIFGKTPNRGVNPDEVVAIGAGIQGGVLKGDVKDVLLLDVTPLSLGIETLGGVMTKLIEKNTTIPCRKSQVFSTAADNQPAVSIHVLQGEREMSRDNKTLGNFELTGIPPAPRGIPQVEVTFDIDANGIVHVSAKDLGTGKEQSIRITASSGLSKEEIDKMVRDAESHADEDKKKRDAIEARNHADSMVYSTEKSLKEFGDKIDAVEKGNIENKIVELKKVMDGEDAEAIKKATDELAQAAHKLAEAMYAAKEQPGEHGETGSGEQARKESGKDENVVDADFEEVKK</sequence>
<reference key="1">
    <citation type="submission" date="2006-10" db="EMBL/GenBank/DDBJ databases">
        <title>Complete sequence of chromosome of Pelobacter propionicus DSM 2379.</title>
        <authorList>
            <consortium name="US DOE Joint Genome Institute"/>
            <person name="Copeland A."/>
            <person name="Lucas S."/>
            <person name="Lapidus A."/>
            <person name="Barry K."/>
            <person name="Detter J.C."/>
            <person name="Glavina del Rio T."/>
            <person name="Hammon N."/>
            <person name="Israni S."/>
            <person name="Dalin E."/>
            <person name="Tice H."/>
            <person name="Pitluck S."/>
            <person name="Saunders E."/>
            <person name="Brettin T."/>
            <person name="Bruce D."/>
            <person name="Han C."/>
            <person name="Tapia R."/>
            <person name="Schmutz J."/>
            <person name="Larimer F."/>
            <person name="Land M."/>
            <person name="Hauser L."/>
            <person name="Kyrpides N."/>
            <person name="Kim E."/>
            <person name="Lovley D."/>
            <person name="Richardson P."/>
        </authorList>
    </citation>
    <scope>NUCLEOTIDE SEQUENCE [LARGE SCALE GENOMIC DNA]</scope>
    <source>
        <strain>DSM 2379 / NBRC 103807 / OttBd1</strain>
    </source>
</reference>
<dbReference type="EMBL" id="CP000482">
    <property type="protein sequence ID" value="ABK99020.1"/>
    <property type="molecule type" value="Genomic_DNA"/>
</dbReference>
<dbReference type="RefSeq" id="WP_011735313.1">
    <property type="nucleotide sequence ID" value="NC_008609.1"/>
</dbReference>
<dbReference type="SMR" id="A1ANV0"/>
<dbReference type="STRING" id="338966.Ppro_1404"/>
<dbReference type="KEGG" id="ppd:Ppro_1404"/>
<dbReference type="eggNOG" id="COG0443">
    <property type="taxonomic scope" value="Bacteria"/>
</dbReference>
<dbReference type="HOGENOM" id="CLU_005965_2_4_7"/>
<dbReference type="OrthoDB" id="9766019at2"/>
<dbReference type="Proteomes" id="UP000006732">
    <property type="component" value="Chromosome"/>
</dbReference>
<dbReference type="GO" id="GO:0005524">
    <property type="term" value="F:ATP binding"/>
    <property type="evidence" value="ECO:0007669"/>
    <property type="project" value="UniProtKB-UniRule"/>
</dbReference>
<dbReference type="GO" id="GO:0140662">
    <property type="term" value="F:ATP-dependent protein folding chaperone"/>
    <property type="evidence" value="ECO:0007669"/>
    <property type="project" value="InterPro"/>
</dbReference>
<dbReference type="GO" id="GO:0051082">
    <property type="term" value="F:unfolded protein binding"/>
    <property type="evidence" value="ECO:0007669"/>
    <property type="project" value="InterPro"/>
</dbReference>
<dbReference type="CDD" id="cd10234">
    <property type="entry name" value="ASKHA_NBD_HSP70_DnaK-like"/>
    <property type="match status" value="1"/>
</dbReference>
<dbReference type="FunFam" id="2.60.34.10:FF:000014">
    <property type="entry name" value="Chaperone protein DnaK HSP70"/>
    <property type="match status" value="1"/>
</dbReference>
<dbReference type="FunFam" id="3.30.420.40:FF:000020">
    <property type="entry name" value="Chaperone protein HscA homolog"/>
    <property type="match status" value="1"/>
</dbReference>
<dbReference type="FunFam" id="1.20.1270.10:FF:000001">
    <property type="entry name" value="Molecular chaperone DnaK"/>
    <property type="match status" value="1"/>
</dbReference>
<dbReference type="FunFam" id="3.30.420.40:FF:000004">
    <property type="entry name" value="Molecular chaperone DnaK"/>
    <property type="match status" value="1"/>
</dbReference>
<dbReference type="FunFam" id="3.90.640.10:FF:000003">
    <property type="entry name" value="Molecular chaperone DnaK"/>
    <property type="match status" value="1"/>
</dbReference>
<dbReference type="Gene3D" id="1.20.1270.10">
    <property type="match status" value="1"/>
</dbReference>
<dbReference type="Gene3D" id="3.30.420.40">
    <property type="match status" value="2"/>
</dbReference>
<dbReference type="Gene3D" id="3.90.640.10">
    <property type="entry name" value="Actin, Chain A, domain 4"/>
    <property type="match status" value="1"/>
</dbReference>
<dbReference type="Gene3D" id="2.60.34.10">
    <property type="entry name" value="Substrate Binding Domain Of DNAk, Chain A, domain 1"/>
    <property type="match status" value="1"/>
</dbReference>
<dbReference type="HAMAP" id="MF_00332">
    <property type="entry name" value="DnaK"/>
    <property type="match status" value="1"/>
</dbReference>
<dbReference type="InterPro" id="IPR043129">
    <property type="entry name" value="ATPase_NBD"/>
</dbReference>
<dbReference type="InterPro" id="IPR012725">
    <property type="entry name" value="Chaperone_DnaK"/>
</dbReference>
<dbReference type="InterPro" id="IPR018181">
    <property type="entry name" value="Heat_shock_70_CS"/>
</dbReference>
<dbReference type="InterPro" id="IPR029048">
    <property type="entry name" value="HSP70_C_sf"/>
</dbReference>
<dbReference type="InterPro" id="IPR029047">
    <property type="entry name" value="HSP70_peptide-bd_sf"/>
</dbReference>
<dbReference type="InterPro" id="IPR013126">
    <property type="entry name" value="Hsp_70_fam"/>
</dbReference>
<dbReference type="NCBIfam" id="NF001413">
    <property type="entry name" value="PRK00290.1"/>
    <property type="match status" value="1"/>
</dbReference>
<dbReference type="NCBIfam" id="NF003520">
    <property type="entry name" value="PRK05183.1"/>
    <property type="match status" value="1"/>
</dbReference>
<dbReference type="NCBIfam" id="TIGR02350">
    <property type="entry name" value="prok_dnaK"/>
    <property type="match status" value="1"/>
</dbReference>
<dbReference type="PANTHER" id="PTHR19375">
    <property type="entry name" value="HEAT SHOCK PROTEIN 70KDA"/>
    <property type="match status" value="1"/>
</dbReference>
<dbReference type="Pfam" id="PF00012">
    <property type="entry name" value="HSP70"/>
    <property type="match status" value="1"/>
</dbReference>
<dbReference type="PRINTS" id="PR00301">
    <property type="entry name" value="HEATSHOCK70"/>
</dbReference>
<dbReference type="SUPFAM" id="SSF53067">
    <property type="entry name" value="Actin-like ATPase domain"/>
    <property type="match status" value="2"/>
</dbReference>
<dbReference type="SUPFAM" id="SSF100934">
    <property type="entry name" value="Heat shock protein 70kD (HSP70), C-terminal subdomain"/>
    <property type="match status" value="1"/>
</dbReference>
<dbReference type="SUPFAM" id="SSF100920">
    <property type="entry name" value="Heat shock protein 70kD (HSP70), peptide-binding domain"/>
    <property type="match status" value="1"/>
</dbReference>
<dbReference type="PROSITE" id="PS00297">
    <property type="entry name" value="HSP70_1"/>
    <property type="match status" value="1"/>
</dbReference>
<dbReference type="PROSITE" id="PS00329">
    <property type="entry name" value="HSP70_2"/>
    <property type="match status" value="1"/>
</dbReference>
<dbReference type="PROSITE" id="PS01036">
    <property type="entry name" value="HSP70_3"/>
    <property type="match status" value="1"/>
</dbReference>